<reference key="1">
    <citation type="journal article" date="1992" name="Virology">
        <title>Channel catfish virus: a new type of herpesvirus.</title>
        <authorList>
            <person name="Davison A.J."/>
        </authorList>
    </citation>
    <scope>NUCLEOTIDE SEQUENCE [LARGE SCALE GENOMIC DNA]</scope>
</reference>
<sequence length="441" mass="50513">MERVLRQLSTGSYGGRRCGGIEERIERWSRTTNSGTNTAGGWIPPPASFLMSNTVLRVHGSDPGFFIHVKHVNTVTNRQHMVRTVRVMPHKTIQSNVVKRATAKFVTDKKRISNVFGVKSTRIEFTTREHRSANYTANCKPLVQPTYKSYFNLIMQSHGECTIGTHRDVINNLNYTTYLYGVCNPMSTMVDSMKQKNFLTPFFFSSINLAGPIETTNQLFISMTINTQKLTHETIYDLGKTLYPIYSLLEVDTKFNWFCNMIALFLECFINTPNKIGMIWMNERYYLENPTENATRSTETWNEYRKYMLEKCAPLLNGFSMAFAQRTGQFVYKNCEMVHIAPFFVAAALEEAVLSYGSFLLNTRKIKSFKELVMMLSVTPTDPRLTVTQTDDRTDVYRTGDRVLTWSHGADFKVGASERLVLGKKINQYIKCKTGDHGDQD</sequence>
<organism>
    <name type="scientific">Ictalurid herpesvirus 1 (strain Auburn)</name>
    <name type="common">IcHV-1</name>
    <name type="synonym">Channel catfish herpesvirus</name>
    <dbReference type="NCBI Taxonomy" id="766178"/>
    <lineage>
        <taxon>Viruses</taxon>
        <taxon>Duplodnaviria</taxon>
        <taxon>Heunggongvirae</taxon>
        <taxon>Peploviricota</taxon>
        <taxon>Herviviricetes</taxon>
        <taxon>Herpesvirales</taxon>
        <taxon>Alloherpesviridae</taxon>
        <taxon>Ictavirus</taxon>
        <taxon>Ictavirus ictaluridallo1</taxon>
        <taxon>Ictalurid herpesvirus 1</taxon>
    </lineage>
</organism>
<gene>
    <name type="primary">ORF34</name>
</gene>
<dbReference type="EMBL" id="M75136">
    <property type="protein sequence ID" value="AAA88137.1"/>
    <property type="molecule type" value="Genomic_DNA"/>
</dbReference>
<dbReference type="PIR" id="H36789">
    <property type="entry name" value="H36789"/>
</dbReference>
<dbReference type="RefSeq" id="NP_041125.1">
    <property type="nucleotide sequence ID" value="NC_001493.2"/>
</dbReference>
<dbReference type="GeneID" id="1488368"/>
<dbReference type="KEGG" id="vg:1488368"/>
<dbReference type="Proteomes" id="UP000007643">
    <property type="component" value="Segment"/>
</dbReference>
<feature type="chain" id="PRO_0000222116" description="Uncharacterized protein ORF34">
    <location>
        <begin position="1"/>
        <end position="441"/>
    </location>
</feature>
<organismHost>
    <name type="scientific">Ictaluridae</name>
    <name type="common">bullhead catfishes</name>
    <dbReference type="NCBI Taxonomy" id="7996"/>
</organismHost>
<protein>
    <recommendedName>
        <fullName>Uncharacterized protein ORF34</fullName>
    </recommendedName>
</protein>
<name>VG34_ICHVA</name>
<accession>Q00155</accession>
<proteinExistence type="predicted"/>
<keyword id="KW-1185">Reference proteome</keyword>